<dbReference type="EMBL" id="CP000962">
    <property type="protein sequence ID" value="ACA54040.1"/>
    <property type="molecule type" value="Genomic_DNA"/>
</dbReference>
<dbReference type="RefSeq" id="WP_012342194.1">
    <property type="nucleotide sequence ID" value="NC_010520.1"/>
</dbReference>
<dbReference type="SMR" id="B1KSQ7"/>
<dbReference type="KEGG" id="cbl:CLK_3310"/>
<dbReference type="HOGENOM" id="CLU_114306_4_3_9"/>
<dbReference type="GO" id="GO:1990904">
    <property type="term" value="C:ribonucleoprotein complex"/>
    <property type="evidence" value="ECO:0007669"/>
    <property type="project" value="UniProtKB-KW"/>
</dbReference>
<dbReference type="GO" id="GO:0005840">
    <property type="term" value="C:ribosome"/>
    <property type="evidence" value="ECO:0007669"/>
    <property type="project" value="UniProtKB-KW"/>
</dbReference>
<dbReference type="GO" id="GO:0046872">
    <property type="term" value="F:metal ion binding"/>
    <property type="evidence" value="ECO:0007669"/>
    <property type="project" value="UniProtKB-KW"/>
</dbReference>
<dbReference type="GO" id="GO:0019843">
    <property type="term" value="F:rRNA binding"/>
    <property type="evidence" value="ECO:0007669"/>
    <property type="project" value="UniProtKB-KW"/>
</dbReference>
<dbReference type="GO" id="GO:0003735">
    <property type="term" value="F:structural constituent of ribosome"/>
    <property type="evidence" value="ECO:0007669"/>
    <property type="project" value="InterPro"/>
</dbReference>
<dbReference type="GO" id="GO:0006412">
    <property type="term" value="P:translation"/>
    <property type="evidence" value="ECO:0007669"/>
    <property type="project" value="UniProtKB-UniRule"/>
</dbReference>
<dbReference type="Gene3D" id="4.10.830.30">
    <property type="entry name" value="Ribosomal protein L31"/>
    <property type="match status" value="1"/>
</dbReference>
<dbReference type="HAMAP" id="MF_00501">
    <property type="entry name" value="Ribosomal_bL31_1"/>
    <property type="match status" value="1"/>
</dbReference>
<dbReference type="InterPro" id="IPR034704">
    <property type="entry name" value="Ribosomal_bL28/bL31-like_sf"/>
</dbReference>
<dbReference type="InterPro" id="IPR002150">
    <property type="entry name" value="Ribosomal_bL31"/>
</dbReference>
<dbReference type="InterPro" id="IPR027491">
    <property type="entry name" value="Ribosomal_bL31_A"/>
</dbReference>
<dbReference type="InterPro" id="IPR042105">
    <property type="entry name" value="Ribosomal_bL31_sf"/>
</dbReference>
<dbReference type="NCBIfam" id="TIGR00105">
    <property type="entry name" value="L31"/>
    <property type="match status" value="1"/>
</dbReference>
<dbReference type="NCBIfam" id="NF000612">
    <property type="entry name" value="PRK00019.1"/>
    <property type="match status" value="1"/>
</dbReference>
<dbReference type="NCBIfam" id="NF001809">
    <property type="entry name" value="PRK00528.1"/>
    <property type="match status" value="1"/>
</dbReference>
<dbReference type="PANTHER" id="PTHR33280">
    <property type="entry name" value="50S RIBOSOMAL PROTEIN L31, CHLOROPLASTIC"/>
    <property type="match status" value="1"/>
</dbReference>
<dbReference type="PANTHER" id="PTHR33280:SF1">
    <property type="entry name" value="LARGE RIBOSOMAL SUBUNIT PROTEIN BL31C"/>
    <property type="match status" value="1"/>
</dbReference>
<dbReference type="Pfam" id="PF01197">
    <property type="entry name" value="Ribosomal_L31"/>
    <property type="match status" value="1"/>
</dbReference>
<dbReference type="PRINTS" id="PR01249">
    <property type="entry name" value="RIBOSOMALL31"/>
</dbReference>
<dbReference type="SUPFAM" id="SSF143800">
    <property type="entry name" value="L28p-like"/>
    <property type="match status" value="1"/>
</dbReference>
<dbReference type="PROSITE" id="PS01143">
    <property type="entry name" value="RIBOSOMAL_L31"/>
    <property type="match status" value="1"/>
</dbReference>
<protein>
    <recommendedName>
        <fullName evidence="1">Large ribosomal subunit protein bL31</fullName>
    </recommendedName>
    <alternativeName>
        <fullName evidence="2">50S ribosomal protein L31</fullName>
    </alternativeName>
</protein>
<keyword id="KW-0479">Metal-binding</keyword>
<keyword id="KW-0687">Ribonucleoprotein</keyword>
<keyword id="KW-0689">Ribosomal protein</keyword>
<keyword id="KW-0694">RNA-binding</keyword>
<keyword id="KW-0699">rRNA-binding</keyword>
<keyword id="KW-0862">Zinc</keyword>
<feature type="chain" id="PRO_1000126595" description="Large ribosomal subunit protein bL31">
    <location>
        <begin position="1"/>
        <end position="72"/>
    </location>
</feature>
<feature type="binding site" evidence="1">
    <location>
        <position position="17"/>
    </location>
    <ligand>
        <name>Zn(2+)</name>
        <dbReference type="ChEBI" id="CHEBI:29105"/>
    </ligand>
</feature>
<feature type="binding site" evidence="1">
    <location>
        <position position="19"/>
    </location>
    <ligand>
        <name>Zn(2+)</name>
        <dbReference type="ChEBI" id="CHEBI:29105"/>
    </ligand>
</feature>
<feature type="binding site" evidence="1">
    <location>
        <position position="37"/>
    </location>
    <ligand>
        <name>Zn(2+)</name>
        <dbReference type="ChEBI" id="CHEBI:29105"/>
    </ligand>
</feature>
<feature type="binding site" evidence="1">
    <location>
        <position position="40"/>
    </location>
    <ligand>
        <name>Zn(2+)</name>
        <dbReference type="ChEBI" id="CHEBI:29105"/>
    </ligand>
</feature>
<comment type="function">
    <text evidence="1">Binds the 23S rRNA.</text>
</comment>
<comment type="cofactor">
    <cofactor evidence="1">
        <name>Zn(2+)</name>
        <dbReference type="ChEBI" id="CHEBI:29105"/>
    </cofactor>
    <text evidence="1">Binds 1 zinc ion per subunit.</text>
</comment>
<comment type="subunit">
    <text evidence="1">Part of the 50S ribosomal subunit.</text>
</comment>
<comment type="similarity">
    <text evidence="1">Belongs to the bacterial ribosomal protein bL31 family. Type A subfamily.</text>
</comment>
<evidence type="ECO:0000255" key="1">
    <source>
        <dbReference type="HAMAP-Rule" id="MF_00501"/>
    </source>
</evidence>
<evidence type="ECO:0000305" key="2"/>
<name>RL31_CLOBM</name>
<reference key="1">
    <citation type="journal article" date="2007" name="PLoS ONE">
        <title>Analysis of the neurotoxin complex genes in Clostridium botulinum A1-A4 and B1 strains: BoNT/A3, /Ba4 and /B1 clusters are located within plasmids.</title>
        <authorList>
            <person name="Smith T.J."/>
            <person name="Hill K.K."/>
            <person name="Foley B.T."/>
            <person name="Detter J.C."/>
            <person name="Munk A.C."/>
            <person name="Bruce D.C."/>
            <person name="Doggett N.A."/>
            <person name="Smith L.A."/>
            <person name="Marks J.D."/>
            <person name="Xie G."/>
            <person name="Brettin T.S."/>
        </authorList>
    </citation>
    <scope>NUCLEOTIDE SEQUENCE [LARGE SCALE GENOMIC DNA]</scope>
    <source>
        <strain>Loch Maree / Type A3</strain>
    </source>
</reference>
<organism>
    <name type="scientific">Clostridium botulinum (strain Loch Maree / Type A3)</name>
    <dbReference type="NCBI Taxonomy" id="498214"/>
    <lineage>
        <taxon>Bacteria</taxon>
        <taxon>Bacillati</taxon>
        <taxon>Bacillota</taxon>
        <taxon>Clostridia</taxon>
        <taxon>Eubacteriales</taxon>
        <taxon>Clostridiaceae</taxon>
        <taxon>Clostridium</taxon>
    </lineage>
</organism>
<sequence>MREGIHPEYNHDVLVKCACGNTFTTGSTNKELKVEICSKCHPFFTGKQKIVDAGGRVDKFMKKFNLSNEDVK</sequence>
<accession>B1KSQ7</accession>
<gene>
    <name evidence="1" type="primary">rpmE</name>
    <name type="ordered locus">CLK_3310</name>
</gene>
<proteinExistence type="inferred from homology"/>